<proteinExistence type="inferred from homology"/>
<gene>
    <name evidence="1" type="primary">atpD</name>
</gene>
<sequence>MSAQVATVGKITQVLGPVIDVEFPPGGLPEVYTALKVTNTSISAEADNLTIEVAQHLGENMVRCISMDSTEGLARGQAVKNTGAPIQVPVGQGTLGRILNVIGEPVDERGPITSSQTWPIHRPAPTFVDQDVRVQAFETGIKVIDLLGPYTRGGKIGLFGGAGVGKTVLLMELIVNVAKERGGFSVFAGVGERTREGNDLYHEMQEGNVSTPRTWMESQCVLVYGQMNEPPGARARVALSALTIAEYFRDMEGHDVLLFVDNIFRFTQAGSEVSALLGRIPSAVGYQPTLSTEMGALQERITSTTKGSVTSVQAIYVPADDLTDPAPATTFAHLDATTVLNRAISELGIYPAVDPLDSTSRILDPNVVGPEHYAVARKVQGILQKYKELQDIIAILGMDELSETDKLTVARARKIQKFLSQPFHVAEVFTGAPGRYVELKDTIQGFKELAEGKHDDLPEAAFYMVGNINEAIEKARKLAAA</sequence>
<feature type="chain" id="PRO_0000144476" description="ATP synthase subunit beta">
    <location>
        <begin position="1"/>
        <end position="481"/>
    </location>
</feature>
<feature type="binding site" evidence="1">
    <location>
        <begin position="160"/>
        <end position="167"/>
    </location>
    <ligand>
        <name>ATP</name>
        <dbReference type="ChEBI" id="CHEBI:30616"/>
    </ligand>
</feature>
<keyword id="KW-0066">ATP synthesis</keyword>
<keyword id="KW-0067">ATP-binding</keyword>
<keyword id="KW-0997">Cell inner membrane</keyword>
<keyword id="KW-1003">Cell membrane</keyword>
<keyword id="KW-0139">CF(1)</keyword>
<keyword id="KW-0375">Hydrogen ion transport</keyword>
<keyword id="KW-0406">Ion transport</keyword>
<keyword id="KW-0472">Membrane</keyword>
<keyword id="KW-0547">Nucleotide-binding</keyword>
<keyword id="KW-1278">Translocase</keyword>
<keyword id="KW-0813">Transport</keyword>
<name>ATPB_STIAU</name>
<evidence type="ECO:0000255" key="1">
    <source>
        <dbReference type="HAMAP-Rule" id="MF_01347"/>
    </source>
</evidence>
<dbReference type="EC" id="7.1.2.2" evidence="1"/>
<dbReference type="EMBL" id="X76879">
    <property type="protein sequence ID" value="CAA54206.1"/>
    <property type="molecule type" value="Genomic_DNA"/>
</dbReference>
<dbReference type="SMR" id="P42469"/>
<dbReference type="GO" id="GO:0005886">
    <property type="term" value="C:plasma membrane"/>
    <property type="evidence" value="ECO:0007669"/>
    <property type="project" value="UniProtKB-SubCell"/>
</dbReference>
<dbReference type="GO" id="GO:0045259">
    <property type="term" value="C:proton-transporting ATP synthase complex"/>
    <property type="evidence" value="ECO:0007669"/>
    <property type="project" value="UniProtKB-KW"/>
</dbReference>
<dbReference type="GO" id="GO:0005524">
    <property type="term" value="F:ATP binding"/>
    <property type="evidence" value="ECO:0007669"/>
    <property type="project" value="UniProtKB-UniRule"/>
</dbReference>
<dbReference type="GO" id="GO:0016887">
    <property type="term" value="F:ATP hydrolysis activity"/>
    <property type="evidence" value="ECO:0007669"/>
    <property type="project" value="InterPro"/>
</dbReference>
<dbReference type="GO" id="GO:0046933">
    <property type="term" value="F:proton-transporting ATP synthase activity, rotational mechanism"/>
    <property type="evidence" value="ECO:0007669"/>
    <property type="project" value="UniProtKB-UniRule"/>
</dbReference>
<dbReference type="CDD" id="cd18110">
    <property type="entry name" value="ATP-synt_F1_beta_C"/>
    <property type="match status" value="1"/>
</dbReference>
<dbReference type="CDD" id="cd18115">
    <property type="entry name" value="ATP-synt_F1_beta_N"/>
    <property type="match status" value="1"/>
</dbReference>
<dbReference type="CDD" id="cd01133">
    <property type="entry name" value="F1-ATPase_beta_CD"/>
    <property type="match status" value="1"/>
</dbReference>
<dbReference type="FunFam" id="1.10.1140.10:FF:000001">
    <property type="entry name" value="ATP synthase subunit beta"/>
    <property type="match status" value="1"/>
</dbReference>
<dbReference type="FunFam" id="2.40.10.170:FF:000005">
    <property type="entry name" value="ATP synthase subunit beta"/>
    <property type="match status" value="1"/>
</dbReference>
<dbReference type="FunFam" id="3.40.50.300:FF:000026">
    <property type="entry name" value="ATP synthase subunit beta"/>
    <property type="match status" value="1"/>
</dbReference>
<dbReference type="Gene3D" id="2.40.10.170">
    <property type="match status" value="1"/>
</dbReference>
<dbReference type="Gene3D" id="1.10.1140.10">
    <property type="entry name" value="Bovine Mitochondrial F1-atpase, Atp Synthase Beta Chain, Chain D, domain 3"/>
    <property type="match status" value="1"/>
</dbReference>
<dbReference type="Gene3D" id="3.40.50.300">
    <property type="entry name" value="P-loop containing nucleotide triphosphate hydrolases"/>
    <property type="match status" value="1"/>
</dbReference>
<dbReference type="HAMAP" id="MF_01347">
    <property type="entry name" value="ATP_synth_beta_bact"/>
    <property type="match status" value="1"/>
</dbReference>
<dbReference type="InterPro" id="IPR003593">
    <property type="entry name" value="AAA+_ATPase"/>
</dbReference>
<dbReference type="InterPro" id="IPR055190">
    <property type="entry name" value="ATP-synt_VA_C"/>
</dbReference>
<dbReference type="InterPro" id="IPR005722">
    <property type="entry name" value="ATP_synth_F1_bsu"/>
</dbReference>
<dbReference type="InterPro" id="IPR020003">
    <property type="entry name" value="ATPase_a/bsu_AS"/>
</dbReference>
<dbReference type="InterPro" id="IPR050053">
    <property type="entry name" value="ATPase_alpha/beta_chains"/>
</dbReference>
<dbReference type="InterPro" id="IPR004100">
    <property type="entry name" value="ATPase_F1/V1/A1_a/bsu_N"/>
</dbReference>
<dbReference type="InterPro" id="IPR036121">
    <property type="entry name" value="ATPase_F1/V1/A1_a/bsu_N_sf"/>
</dbReference>
<dbReference type="InterPro" id="IPR000194">
    <property type="entry name" value="ATPase_F1/V1/A1_a/bsu_nucl-bd"/>
</dbReference>
<dbReference type="InterPro" id="IPR024034">
    <property type="entry name" value="ATPase_F1/V1_b/a_C"/>
</dbReference>
<dbReference type="InterPro" id="IPR027417">
    <property type="entry name" value="P-loop_NTPase"/>
</dbReference>
<dbReference type="NCBIfam" id="TIGR01039">
    <property type="entry name" value="atpD"/>
    <property type="match status" value="1"/>
</dbReference>
<dbReference type="PANTHER" id="PTHR15184">
    <property type="entry name" value="ATP SYNTHASE"/>
    <property type="match status" value="1"/>
</dbReference>
<dbReference type="PANTHER" id="PTHR15184:SF71">
    <property type="entry name" value="ATP SYNTHASE SUBUNIT BETA, MITOCHONDRIAL"/>
    <property type="match status" value="1"/>
</dbReference>
<dbReference type="Pfam" id="PF00006">
    <property type="entry name" value="ATP-synt_ab"/>
    <property type="match status" value="1"/>
</dbReference>
<dbReference type="Pfam" id="PF02874">
    <property type="entry name" value="ATP-synt_ab_N"/>
    <property type="match status" value="1"/>
</dbReference>
<dbReference type="Pfam" id="PF22919">
    <property type="entry name" value="ATP-synt_VA_C"/>
    <property type="match status" value="1"/>
</dbReference>
<dbReference type="PIRSF" id="PIRSF039072">
    <property type="entry name" value="ATPase_subunit_beta"/>
    <property type="match status" value="1"/>
</dbReference>
<dbReference type="SMART" id="SM00382">
    <property type="entry name" value="AAA"/>
    <property type="match status" value="1"/>
</dbReference>
<dbReference type="SUPFAM" id="SSF47917">
    <property type="entry name" value="C-terminal domain of alpha and beta subunits of F1 ATP synthase"/>
    <property type="match status" value="1"/>
</dbReference>
<dbReference type="SUPFAM" id="SSF50615">
    <property type="entry name" value="N-terminal domain of alpha and beta subunits of F1 ATP synthase"/>
    <property type="match status" value="1"/>
</dbReference>
<dbReference type="SUPFAM" id="SSF52540">
    <property type="entry name" value="P-loop containing nucleoside triphosphate hydrolases"/>
    <property type="match status" value="1"/>
</dbReference>
<dbReference type="PROSITE" id="PS00152">
    <property type="entry name" value="ATPASE_ALPHA_BETA"/>
    <property type="match status" value="1"/>
</dbReference>
<protein>
    <recommendedName>
        <fullName evidence="1">ATP synthase subunit beta</fullName>
        <ecNumber evidence="1">7.1.2.2</ecNumber>
    </recommendedName>
    <alternativeName>
        <fullName evidence="1">ATP synthase F1 sector subunit beta</fullName>
    </alternativeName>
    <alternativeName>
        <fullName evidence="1">F-ATPase subunit beta</fullName>
    </alternativeName>
</protein>
<comment type="function">
    <text evidence="1">Produces ATP from ADP in the presence of a proton gradient across the membrane. The catalytic sites are hosted primarily by the beta subunits.</text>
</comment>
<comment type="catalytic activity">
    <reaction evidence="1">
        <text>ATP + H2O + 4 H(+)(in) = ADP + phosphate + 5 H(+)(out)</text>
        <dbReference type="Rhea" id="RHEA:57720"/>
        <dbReference type="ChEBI" id="CHEBI:15377"/>
        <dbReference type="ChEBI" id="CHEBI:15378"/>
        <dbReference type="ChEBI" id="CHEBI:30616"/>
        <dbReference type="ChEBI" id="CHEBI:43474"/>
        <dbReference type="ChEBI" id="CHEBI:456216"/>
        <dbReference type="EC" id="7.1.2.2"/>
    </reaction>
</comment>
<comment type="subunit">
    <text evidence="1">F-type ATPases have 2 components, CF(1) - the catalytic core - and CF(0) - the membrane proton channel. CF(1) has five subunits: alpha(3), beta(3), gamma(1), delta(1), epsilon(1). CF(0) has three main subunits: a(1), b(2) and c(9-12). The alpha and beta chains form an alternating ring which encloses part of the gamma chain. CF(1) is attached to CF(0) by a central stalk formed by the gamma and epsilon chains, while a peripheral stalk is formed by the delta and b chains.</text>
</comment>
<comment type="subcellular location">
    <subcellularLocation>
        <location evidence="1">Cell inner membrane</location>
        <topology evidence="1">Peripheral membrane protein</topology>
    </subcellularLocation>
</comment>
<comment type="similarity">
    <text evidence="1">Belongs to the ATPase alpha/beta chains family.</text>
</comment>
<organism>
    <name type="scientific">Stigmatella aurantiaca</name>
    <dbReference type="NCBI Taxonomy" id="41"/>
    <lineage>
        <taxon>Bacteria</taxon>
        <taxon>Pseudomonadati</taxon>
        <taxon>Myxococcota</taxon>
        <taxon>Myxococcia</taxon>
        <taxon>Myxococcales</taxon>
        <taxon>Cystobacterineae</taxon>
        <taxon>Archangiaceae</taxon>
        <taxon>Stigmatella</taxon>
    </lineage>
</organism>
<accession>P42469</accession>
<reference key="1">
    <citation type="journal article" date="1993" name="Antonie Van Leeuwenhoek">
        <title>Phylogenetic relationships of Bacteria based on comparative sequence analysis of elongation factor Tu and ATP-synthase beta-subunit genes.</title>
        <authorList>
            <person name="Ludwig W."/>
            <person name="Neumaier J."/>
            <person name="Klugbauer N."/>
            <person name="Brockmann E."/>
            <person name="Roller C."/>
            <person name="Klugbauer S."/>
            <person name="Reetz K."/>
            <person name="Schachtner I."/>
            <person name="Ludvigsen A."/>
            <person name="Bachleitner M."/>
            <person name="Fischer U."/>
            <person name="Schleifer K.H."/>
        </authorList>
    </citation>
    <scope>NUCLEOTIDE SEQUENCE [GENOMIC DNA]</scope>
    <source>
        <strain>SGA1</strain>
    </source>
</reference>